<name>VSTX1_GRARO</name>
<keyword id="KW-0002">3D-structure</keyword>
<keyword id="KW-0903">Direct protein sequencing</keyword>
<keyword id="KW-1015">Disulfide bond</keyword>
<keyword id="KW-0872">Ion channel impairing toxin</keyword>
<keyword id="KW-0960">Knottin</keyword>
<keyword id="KW-0528">Neurotoxin</keyword>
<keyword id="KW-0632">Potassium channel impairing toxin</keyword>
<keyword id="KW-0964">Secreted</keyword>
<keyword id="KW-0732">Signal</keyword>
<keyword id="KW-0800">Toxin</keyword>
<keyword id="KW-1220">Voltage-gated potassium channel impairing toxin</keyword>
<keyword id="KW-0738">Voltage-gated sodium channel impairing toxin</keyword>
<evidence type="ECO:0000255" key="1"/>
<evidence type="ECO:0000269" key="2">
    <source>
    </source>
</evidence>
<evidence type="ECO:0000269" key="3">
    <source>
    </source>
</evidence>
<evidence type="ECO:0000269" key="4">
    <source>
    </source>
</evidence>
<evidence type="ECO:0000269" key="5">
    <source>
    </source>
</evidence>
<evidence type="ECO:0000269" key="6">
    <source>
    </source>
</evidence>
<evidence type="ECO:0000303" key="7">
    <source>
    </source>
</evidence>
<evidence type="ECO:0000305" key="8"/>
<evidence type="ECO:0000305" key="9">
    <source>
    </source>
</evidence>
<evidence type="ECO:0007829" key="10">
    <source>
        <dbReference type="PDB" id="1S6X"/>
    </source>
</evidence>
<organism>
    <name type="scientific">Grammostola rosea</name>
    <name type="common">Chilean rose tarantula</name>
    <name type="synonym">Grammostola spatulata</name>
    <dbReference type="NCBI Taxonomy" id="432528"/>
    <lineage>
        <taxon>Eukaryota</taxon>
        <taxon>Metazoa</taxon>
        <taxon>Ecdysozoa</taxon>
        <taxon>Arthropoda</taxon>
        <taxon>Chelicerata</taxon>
        <taxon>Arachnida</taxon>
        <taxon>Araneae</taxon>
        <taxon>Mygalomorphae</taxon>
        <taxon>Theraphosidae</taxon>
        <taxon>Grammostola</taxon>
    </lineage>
</organism>
<accession>P60980</accession>
<accession>M5AY63</accession>
<protein>
    <recommendedName>
        <fullName>Kappa-theraphotoxin-Gr3a</fullName>
        <shortName>Kappa-TRTX-Gr3a</shortName>
    </recommendedName>
    <alternativeName>
        <fullName>Voltage sensor toxin 1</fullName>
        <shortName evidence="7">VsTx1</shortName>
    </alternativeName>
</protein>
<dbReference type="EMBL" id="AB200994">
    <property type="protein sequence ID" value="BAN13490.1"/>
    <property type="molecule type" value="mRNA"/>
</dbReference>
<dbReference type="PDB" id="1S6X">
    <property type="method" value="NMR"/>
    <property type="chains" value="A=30-63"/>
</dbReference>
<dbReference type="PDB" id="2N1N">
    <property type="method" value="NMR"/>
    <property type="chains" value="A=30-63"/>
</dbReference>
<dbReference type="PDBsum" id="1S6X"/>
<dbReference type="PDBsum" id="2N1N"/>
<dbReference type="SMR" id="P60980"/>
<dbReference type="TCDB" id="8.B.5.3.8">
    <property type="family name" value="the na(+)/k(+)/ca(2+) channel targeting tarantula huwentoxin (tht) family"/>
</dbReference>
<dbReference type="ArachnoServer" id="AS000423">
    <property type="toxin name" value="kappa-theraphotoxin-Gr3a"/>
</dbReference>
<dbReference type="EvolutionaryTrace" id="P60980"/>
<dbReference type="GO" id="GO:0005576">
    <property type="term" value="C:extracellular region"/>
    <property type="evidence" value="ECO:0007669"/>
    <property type="project" value="UniProtKB-SubCell"/>
</dbReference>
<dbReference type="GO" id="GO:0008200">
    <property type="term" value="F:ion channel inhibitor activity"/>
    <property type="evidence" value="ECO:0007669"/>
    <property type="project" value="InterPro"/>
</dbReference>
<dbReference type="GO" id="GO:0015459">
    <property type="term" value="F:potassium channel regulator activity"/>
    <property type="evidence" value="ECO:0007669"/>
    <property type="project" value="UniProtKB-KW"/>
</dbReference>
<dbReference type="GO" id="GO:0017080">
    <property type="term" value="F:sodium channel regulator activity"/>
    <property type="evidence" value="ECO:0007669"/>
    <property type="project" value="UniProtKB-KW"/>
</dbReference>
<dbReference type="GO" id="GO:0090729">
    <property type="term" value="F:toxin activity"/>
    <property type="evidence" value="ECO:0007669"/>
    <property type="project" value="UniProtKB-KW"/>
</dbReference>
<dbReference type="InterPro" id="IPR011696">
    <property type="entry name" value="Huwentoxin-1"/>
</dbReference>
<dbReference type="InterPro" id="IPR013140">
    <property type="entry name" value="Huwentoxin_CS1"/>
</dbReference>
<dbReference type="Pfam" id="PF07740">
    <property type="entry name" value="Toxin_12"/>
    <property type="match status" value="1"/>
</dbReference>
<dbReference type="SUPFAM" id="SSF57059">
    <property type="entry name" value="omega toxin-like"/>
    <property type="match status" value="1"/>
</dbReference>
<dbReference type="PROSITE" id="PS60021">
    <property type="entry name" value="HWTX_1"/>
    <property type="match status" value="1"/>
</dbReference>
<sequence>MKTSVFVLVLGLVLLFAVSFATEMEESARECGKFMWKCKNSNDCCKDLVCSSRWKWCVLASPF</sequence>
<feature type="signal peptide" evidence="1">
    <location>
        <begin position="1"/>
        <end position="21"/>
    </location>
</feature>
<feature type="propeptide" id="PRO_0000434821" evidence="8">
    <location>
        <begin position="22"/>
        <end position="29"/>
    </location>
</feature>
<feature type="peptide" id="PRO_0000045008" description="Kappa-theraphotoxin-Gr3a">
    <location>
        <begin position="30"/>
        <end position="63"/>
    </location>
</feature>
<feature type="disulfide bond" evidence="4">
    <location>
        <begin position="31"/>
        <end position="45"/>
    </location>
</feature>
<feature type="disulfide bond" evidence="4">
    <location>
        <begin position="38"/>
        <end position="50"/>
    </location>
</feature>
<feature type="disulfide bond" evidence="4">
    <location>
        <begin position="44"/>
        <end position="57"/>
    </location>
</feature>
<feature type="strand" evidence="10">
    <location>
        <begin position="39"/>
        <end position="41"/>
    </location>
</feature>
<feature type="strand" evidence="10">
    <location>
        <begin position="48"/>
        <end position="51"/>
    </location>
</feature>
<feature type="turn" evidence="10">
    <location>
        <begin position="52"/>
        <end position="55"/>
    </location>
</feature>
<feature type="strand" evidence="10">
    <location>
        <begin position="56"/>
        <end position="59"/>
    </location>
</feature>
<proteinExistence type="evidence at protein level"/>
<comment type="function">
    <text evidence="2 3 5 6">Inhibits sodium channels Nav1.7/SCN9A and potassium channels Kv11.1/KCNH2. Also binds the voltage-sensor domain of the potassium channel KvAP (from the archaeon Aeropyrum pernix) with very slow apparent binding kinetics and affects channel gating. Reaches its target by dynamically partitioning into anionic or zwitterionic headgroup lipid membranes. May bind to the open state of KvAP.</text>
</comment>
<comment type="subcellular location">
    <subcellularLocation>
        <location>Secreted</location>
    </subcellularLocation>
</comment>
<comment type="tissue specificity">
    <text>Expressed by the venom gland.</text>
</comment>
<comment type="domain">
    <text>The presence of a 'disulfide through disulfide knot' structurally defines this protein as a knottin.</text>
</comment>
<comment type="mass spectrometry"/>
<comment type="miscellaneous">
    <text evidence="9">Negative results: does not inhibit potassium channels Kv1.1/KCNA1 (IC(50)&gt;200 uM), Kv1.4/KCNA4 (IC(50)&gt;200 uM), Kv11.2/KCNH6 (IC(50)=45 uM) and Kv11.3/KCNH7 (IC(50)=55 uM) and sodium channels Nav1.1/SCN1A, Nav1.2/SCN2A, Nav1.3/SCN3A, Nav1.4/SCN4A, Nav1.5/SCN5A, Nav1.6/SCN8A.</text>
</comment>
<comment type="similarity">
    <text evidence="8">Belongs to the neurotoxin 10 (Hwtx-1) family. 63 (VsTx1) subfamily.</text>
</comment>
<reference key="1">
    <citation type="submission" date="2005-01" db="EMBL/GenBank/DDBJ databases">
        <title>Grammostola spatulata venom gland cDNA.</title>
        <authorList>
            <person name="Kimura T."/>
            <person name="Kubo T."/>
        </authorList>
    </citation>
    <scope>NUCLEOTIDE SEQUENCE [MRNA]</scope>
    <source>
        <tissue>Venom gland</tissue>
    </source>
</reference>
<reference key="2">
    <citation type="journal article" date="2003" name="Nature">
        <title>Functional analysis of an archaebacterial voltage-dependent K+ channel.</title>
        <authorList>
            <person name="Ruta V."/>
            <person name="Jiang Y."/>
            <person name="Lee A."/>
            <person name="Chen J."/>
            <person name="MacKinnon R."/>
        </authorList>
    </citation>
    <scope>PROTEIN SEQUENCE OF 30-63</scope>
    <scope>IDENTIFICATION BY MASS SPECTROMETRY</scope>
    <source>
        <tissue>Venom</tissue>
    </source>
</reference>
<reference key="3">
    <citation type="journal article" date="2010" name="J. Biol. Chem.">
        <title>Target promiscuity and heterogeneous effects of tarantula venom peptides affecting Na+ and K+ ion channels.</title>
        <authorList>
            <person name="Redaelli E."/>
            <person name="Cassulini R.R."/>
            <person name="Silva D.F."/>
            <person name="Clement H."/>
            <person name="Schiavon E."/>
            <person name="Zamudio F.Z."/>
            <person name="Odell G."/>
            <person name="Arcangeli A."/>
            <person name="Clare J.J."/>
            <person name="Alagon A."/>
            <person name="de la Vega R.C."/>
            <person name="Possani L.D."/>
            <person name="Wanke E."/>
        </authorList>
    </citation>
    <scope>PROTEIN SEQUENCE OF 30-63</scope>
    <scope>MASS SPECTROMETRY</scope>
    <scope>FUNCTION</scope>
    <scope>TOXIN TARGET</scope>
</reference>
<reference key="4">
    <citation type="journal article" date="2010" name="J. Biol. Chem.">
        <authorList>
            <person name="Redaelli E."/>
            <person name="Cassulini R.R."/>
            <person name="Silva D.F."/>
            <person name="Clement H."/>
            <person name="Schiavon E."/>
            <person name="Zamudio F.Z."/>
            <person name="Odell G."/>
            <person name="Arcangeli A."/>
            <person name="Clare J.J."/>
            <person name="Alagon A."/>
            <person name="de la Vega R.C."/>
            <person name="Possani L.D."/>
            <person name="Wanke E."/>
        </authorList>
    </citation>
    <scope>ERRATUM OF PUBMED:19955179</scope>
</reference>
<reference key="5">
    <citation type="journal article" date="2004" name="Nature">
        <title>A membrane-access mechanism of ion channel inhibition by voltage sensor toxins from spider venom.</title>
        <authorList>
            <person name="Lee S.-Y."/>
            <person name="MacKinnon R."/>
        </authorList>
    </citation>
    <scope>FUNCTION</scope>
</reference>
<reference key="6">
    <citation type="journal article" date="2004" name="Biochemistry">
        <title>Localization of the voltage-sensor toxin receptor on KvAP.</title>
        <authorList>
            <person name="Ruta V."/>
            <person name="MacKinnon R."/>
        </authorList>
    </citation>
    <scope>FUNCTION</scope>
    <source>
        <tissue>Venom</tissue>
    </source>
</reference>
<reference key="7">
    <citation type="journal article" date="2006" name="Biochemistry">
        <title>Vstx1, a modifier of Kv channel gating, localizes to the interfacial region of lipid bilayers.</title>
        <authorList>
            <person name="Bemporad D."/>
            <person name="Sands Z.A."/>
            <person name="Wee C.L."/>
            <person name="Grottesi A."/>
            <person name="Sansom M.S."/>
        </authorList>
    </citation>
    <scope>FUNCTION</scope>
</reference>
<reference key="8">
    <citation type="journal article" date="2005" name="Biochemistry">
        <title>Solution structure and lipid membrane partitioning of VSTx1, an inhibitor of the KvAP potassium channel.</title>
        <authorList>
            <person name="Jung H.J."/>
            <person name="Lee J.Y."/>
            <person name="Kim S.H."/>
            <person name="Eu Y.-J."/>
            <person name="Shin S.Y."/>
            <person name="Milescu M."/>
            <person name="Swartz K.J."/>
            <person name="Kim J.I."/>
        </authorList>
    </citation>
    <scope>STRUCTURE BY NMR OF 30-63</scope>
    <scope>DISULFIDE BONDS</scope>
    <scope>MEMBRANE-PARTITIONING</scope>
    <scope>SYNTHESIS</scope>
</reference>